<evidence type="ECO:0000256" key="1">
    <source>
        <dbReference type="SAM" id="MobiDB-lite"/>
    </source>
</evidence>
<organismHost>
    <name type="scientific">Acanthamoeba polyphaga</name>
    <name type="common">Amoeba</name>
    <dbReference type="NCBI Taxonomy" id="5757"/>
</organismHost>
<feature type="chain" id="PRO_0000071387" description="Uncharacterized protein R890">
    <location>
        <begin position="1"/>
        <end position="180"/>
    </location>
</feature>
<feature type="region of interest" description="Disordered" evidence="1">
    <location>
        <begin position="114"/>
        <end position="180"/>
    </location>
</feature>
<feature type="compositionally biased region" description="Basic and acidic residues" evidence="1">
    <location>
        <begin position="114"/>
        <end position="136"/>
    </location>
</feature>
<feature type="compositionally biased region" description="Acidic residues" evidence="1">
    <location>
        <begin position="137"/>
        <end position="146"/>
    </location>
</feature>
<feature type="compositionally biased region" description="Low complexity" evidence="1">
    <location>
        <begin position="147"/>
        <end position="173"/>
    </location>
</feature>
<dbReference type="EMBL" id="AY653733">
    <property type="protein sequence ID" value="AAV51147.1"/>
    <property type="molecule type" value="Genomic_DNA"/>
</dbReference>
<dbReference type="SMR" id="Q5UQY0"/>
<dbReference type="KEGG" id="vg:9925558"/>
<dbReference type="OrthoDB" id="18645at10239"/>
<dbReference type="Proteomes" id="UP000001134">
    <property type="component" value="Genome"/>
</dbReference>
<accession>Q5UQY0</accession>
<protein>
    <recommendedName>
        <fullName>Uncharacterized protein R890</fullName>
    </recommendedName>
</protein>
<gene>
    <name type="ordered locus">MIMI_R890</name>
</gene>
<organism>
    <name type="scientific">Acanthamoeba polyphaga mimivirus</name>
    <name type="common">APMV</name>
    <dbReference type="NCBI Taxonomy" id="212035"/>
    <lineage>
        <taxon>Viruses</taxon>
        <taxon>Varidnaviria</taxon>
        <taxon>Bamfordvirae</taxon>
        <taxon>Nucleocytoviricota</taxon>
        <taxon>Megaviricetes</taxon>
        <taxon>Imitervirales</taxon>
        <taxon>Mimiviridae</taxon>
        <taxon>Megamimivirinae</taxon>
        <taxon>Mimivirus</taxon>
        <taxon>Mimivirus bradfordmassiliense</taxon>
    </lineage>
</organism>
<proteinExistence type="predicted"/>
<reference key="1">
    <citation type="journal article" date="2004" name="Science">
        <title>The 1.2-megabase genome sequence of Mimivirus.</title>
        <authorList>
            <person name="Raoult D."/>
            <person name="Audic S."/>
            <person name="Robert C."/>
            <person name="Abergel C."/>
            <person name="Renesto P."/>
            <person name="Ogata H."/>
            <person name="La Scola B."/>
            <person name="Susan M."/>
            <person name="Claverie J.-M."/>
        </authorList>
    </citation>
    <scope>NUCLEOTIDE SEQUENCE [LARGE SCALE GENOMIC DNA]</scope>
    <source>
        <strain>Rowbotham-Bradford</strain>
    </source>
</reference>
<keyword id="KW-1185">Reference proteome</keyword>
<name>YR890_MIMIV</name>
<sequence>MFLHPSYRNNLFSTKCGTCDLDAKVEFRSGTVTFYRNKNGSIYNFCSFECMDKFNRTKICWFCSYHSDLVSCESGFMICTSDTYWKYSCRDKYYIRLKHDLILEDDPLTDDDYDKISESDSLPDEYKEYVVKHDSDNSDNDSDNSDNDSNNSDNDSNNSDSDSDNSNDPNNFDNPDDNPK</sequence>